<accession>P80798</accession>
<protein>
    <recommendedName>
        <fullName>65 kDa cell wall protein</fullName>
    </recommendedName>
</protein>
<proteinExistence type="evidence at protein level"/>
<dbReference type="InParanoid" id="P80798"/>
<dbReference type="Proteomes" id="UP000004994">
    <property type="component" value="Unplaced"/>
</dbReference>
<dbReference type="GO" id="GO:0005576">
    <property type="term" value="C:extracellular region"/>
    <property type="evidence" value="ECO:0007669"/>
    <property type="project" value="UniProtKB-KW"/>
</dbReference>
<keyword id="KW-0134">Cell wall</keyword>
<keyword id="KW-0903">Direct protein sequencing</keyword>
<keyword id="KW-1185">Reference proteome</keyword>
<keyword id="KW-0964">Secreted</keyword>
<organism>
    <name type="scientific">Solanum lycopersicum</name>
    <name type="common">Tomato</name>
    <name type="synonym">Lycopersicon esculentum</name>
    <dbReference type="NCBI Taxonomy" id="4081"/>
    <lineage>
        <taxon>Eukaryota</taxon>
        <taxon>Viridiplantae</taxon>
        <taxon>Streptophyta</taxon>
        <taxon>Embryophyta</taxon>
        <taxon>Tracheophyta</taxon>
        <taxon>Spermatophyta</taxon>
        <taxon>Magnoliopsida</taxon>
        <taxon>eudicotyledons</taxon>
        <taxon>Gunneridae</taxon>
        <taxon>Pentapetalae</taxon>
        <taxon>asterids</taxon>
        <taxon>lamiids</taxon>
        <taxon>Solanales</taxon>
        <taxon>Solanaceae</taxon>
        <taxon>Solanoideae</taxon>
        <taxon>Solaneae</taxon>
        <taxon>Solanum</taxon>
        <taxon>Solanum subgen. Lycopersicon</taxon>
    </lineage>
</organism>
<name>CWP01_SOLLC</name>
<evidence type="ECO:0000269" key="1">
    <source>
    </source>
</evidence>
<evidence type="ECO:0000303" key="2">
    <source>
    </source>
</evidence>
<evidence type="ECO:0000305" key="3"/>
<sequence length="15" mass="1574">EGKAIGLAKPRMDST</sequence>
<reference evidence="3" key="1">
    <citation type="journal article" date="1997" name="J. Biol. Chem.">
        <title>Differential extraction and protein sequencing reveals major differences in patterns of primary cell wall proteins from plants.</title>
        <authorList>
            <person name="Robertson D."/>
            <person name="Mitchell G.P."/>
            <person name="Gilroy J.S."/>
            <person name="Gerrish C."/>
            <person name="Bolwell G.P."/>
            <person name="Slabas A.R."/>
        </authorList>
    </citation>
    <scope>PROTEIN SEQUENCE</scope>
    <scope>SUBCELLULAR LOCATION</scope>
</reference>
<comment type="subcellular location">
    <subcellularLocation>
        <location evidence="1">Secreted</location>
        <location evidence="1">Cell wall</location>
    </subcellularLocation>
</comment>
<feature type="chain" id="PRO_0000079621" description="65 kDa cell wall protein">
    <location>
        <begin position="1"/>
        <end position="15" status="greater than"/>
    </location>
</feature>
<feature type="non-terminal residue" evidence="2">
    <location>
        <position position="15"/>
    </location>
</feature>